<evidence type="ECO:0000255" key="1">
    <source>
        <dbReference type="HAMAP-Rule" id="MF_01398"/>
    </source>
</evidence>
<gene>
    <name evidence="1" type="primary">atpF</name>
    <name type="ordered locus">CBUD_0180</name>
</gene>
<accession>A9KBG1</accession>
<reference key="1">
    <citation type="journal article" date="2009" name="Infect. Immun.">
        <title>Comparative genomics reveal extensive transposon-mediated genomic plasticity and diversity among potential effector proteins within the genus Coxiella.</title>
        <authorList>
            <person name="Beare P.A."/>
            <person name="Unsworth N."/>
            <person name="Andoh M."/>
            <person name="Voth D.E."/>
            <person name="Omsland A."/>
            <person name="Gilk S.D."/>
            <person name="Williams K.P."/>
            <person name="Sobral B.W."/>
            <person name="Kupko J.J. III"/>
            <person name="Porcella S.F."/>
            <person name="Samuel J.E."/>
            <person name="Heinzen R.A."/>
        </authorList>
    </citation>
    <scope>NUCLEOTIDE SEQUENCE [LARGE SCALE GENOMIC DNA]</scope>
    <source>
        <strain>Dugway 5J108-111</strain>
    </source>
</reference>
<organism>
    <name type="scientific">Coxiella burnetii (strain Dugway 5J108-111)</name>
    <dbReference type="NCBI Taxonomy" id="434922"/>
    <lineage>
        <taxon>Bacteria</taxon>
        <taxon>Pseudomonadati</taxon>
        <taxon>Pseudomonadota</taxon>
        <taxon>Gammaproteobacteria</taxon>
        <taxon>Legionellales</taxon>
        <taxon>Coxiellaceae</taxon>
        <taxon>Coxiella</taxon>
    </lineage>
</organism>
<comment type="function">
    <text evidence="1">F(1)F(0) ATP synthase produces ATP from ADP in the presence of a proton or sodium gradient. F-type ATPases consist of two structural domains, F(1) containing the extramembraneous catalytic core and F(0) containing the membrane proton channel, linked together by a central stalk and a peripheral stalk. During catalysis, ATP synthesis in the catalytic domain of F(1) is coupled via a rotary mechanism of the central stalk subunits to proton translocation.</text>
</comment>
<comment type="function">
    <text evidence="1">Component of the F(0) channel, it forms part of the peripheral stalk, linking F(1) to F(0).</text>
</comment>
<comment type="subunit">
    <text evidence="1">F-type ATPases have 2 components, F(1) - the catalytic core - and F(0) - the membrane proton channel. F(1) has five subunits: alpha(3), beta(3), gamma(1), delta(1), epsilon(1). F(0) has three main subunits: a(1), b(2) and c(10-14). The alpha and beta chains form an alternating ring which encloses part of the gamma chain. F(1) is attached to F(0) by a central stalk formed by the gamma and epsilon chains, while a peripheral stalk is formed by the delta and b chains.</text>
</comment>
<comment type="subcellular location">
    <subcellularLocation>
        <location evidence="1">Cell inner membrane</location>
        <topology evidence="1">Single-pass membrane protein</topology>
    </subcellularLocation>
</comment>
<comment type="similarity">
    <text evidence="1">Belongs to the ATPase B chain family.</text>
</comment>
<sequence>MDINASLIVQMLVFVVFIGLTMKFIWPPLTKALEARRKNIADGLAAAEEGRKELELAEIKSKEQLTEAKTQAAHIIEQANQRANHIVEEAKNKAREEGAHLIQLAKNEIEQEYNAAKTELLKQISTIAVAGAQKILQREVDKASNDRLVDELVSEI</sequence>
<feature type="chain" id="PRO_0000368445" description="ATP synthase subunit b">
    <location>
        <begin position="1"/>
        <end position="156"/>
    </location>
</feature>
<feature type="transmembrane region" description="Helical" evidence="1">
    <location>
        <begin position="7"/>
        <end position="27"/>
    </location>
</feature>
<proteinExistence type="inferred from homology"/>
<name>ATPF_COXBN</name>
<dbReference type="EMBL" id="CP000733">
    <property type="protein sequence ID" value="ABS77669.1"/>
    <property type="molecule type" value="Genomic_DNA"/>
</dbReference>
<dbReference type="RefSeq" id="WP_005770032.1">
    <property type="nucleotide sequence ID" value="NC_009727.1"/>
</dbReference>
<dbReference type="SMR" id="A9KBG1"/>
<dbReference type="KEGG" id="cbd:CBUD_0180"/>
<dbReference type="HOGENOM" id="CLU_079215_4_5_6"/>
<dbReference type="Proteomes" id="UP000008555">
    <property type="component" value="Chromosome"/>
</dbReference>
<dbReference type="GO" id="GO:0005886">
    <property type="term" value="C:plasma membrane"/>
    <property type="evidence" value="ECO:0007669"/>
    <property type="project" value="UniProtKB-SubCell"/>
</dbReference>
<dbReference type="GO" id="GO:0045259">
    <property type="term" value="C:proton-transporting ATP synthase complex"/>
    <property type="evidence" value="ECO:0007669"/>
    <property type="project" value="UniProtKB-KW"/>
</dbReference>
<dbReference type="GO" id="GO:0046933">
    <property type="term" value="F:proton-transporting ATP synthase activity, rotational mechanism"/>
    <property type="evidence" value="ECO:0007669"/>
    <property type="project" value="UniProtKB-UniRule"/>
</dbReference>
<dbReference type="GO" id="GO:0046961">
    <property type="term" value="F:proton-transporting ATPase activity, rotational mechanism"/>
    <property type="evidence" value="ECO:0007669"/>
    <property type="project" value="TreeGrafter"/>
</dbReference>
<dbReference type="CDD" id="cd06503">
    <property type="entry name" value="ATP-synt_Fo_b"/>
    <property type="match status" value="1"/>
</dbReference>
<dbReference type="FunFam" id="1.20.5.620:FF:000001">
    <property type="entry name" value="ATP synthase subunit b"/>
    <property type="match status" value="1"/>
</dbReference>
<dbReference type="Gene3D" id="1.20.5.620">
    <property type="entry name" value="F1F0 ATP synthase subunit B, membrane domain"/>
    <property type="match status" value="1"/>
</dbReference>
<dbReference type="HAMAP" id="MF_01398">
    <property type="entry name" value="ATP_synth_b_bprime"/>
    <property type="match status" value="1"/>
</dbReference>
<dbReference type="InterPro" id="IPR028987">
    <property type="entry name" value="ATP_synth_B-like_membr_sf"/>
</dbReference>
<dbReference type="InterPro" id="IPR002146">
    <property type="entry name" value="ATP_synth_b/b'su_bac/chlpt"/>
</dbReference>
<dbReference type="InterPro" id="IPR005864">
    <property type="entry name" value="ATP_synth_F0_bsu_bac"/>
</dbReference>
<dbReference type="InterPro" id="IPR050059">
    <property type="entry name" value="ATP_synthase_B_chain"/>
</dbReference>
<dbReference type="NCBIfam" id="TIGR01144">
    <property type="entry name" value="ATP_synt_b"/>
    <property type="match status" value="1"/>
</dbReference>
<dbReference type="NCBIfam" id="NF004411">
    <property type="entry name" value="PRK05759.1-2"/>
    <property type="match status" value="1"/>
</dbReference>
<dbReference type="PANTHER" id="PTHR33445:SF1">
    <property type="entry name" value="ATP SYNTHASE SUBUNIT B"/>
    <property type="match status" value="1"/>
</dbReference>
<dbReference type="PANTHER" id="PTHR33445">
    <property type="entry name" value="ATP SYNTHASE SUBUNIT B', CHLOROPLASTIC"/>
    <property type="match status" value="1"/>
</dbReference>
<dbReference type="Pfam" id="PF00430">
    <property type="entry name" value="ATP-synt_B"/>
    <property type="match status" value="1"/>
</dbReference>
<dbReference type="SUPFAM" id="SSF81573">
    <property type="entry name" value="F1F0 ATP synthase subunit B, membrane domain"/>
    <property type="match status" value="1"/>
</dbReference>
<keyword id="KW-0066">ATP synthesis</keyword>
<keyword id="KW-0997">Cell inner membrane</keyword>
<keyword id="KW-1003">Cell membrane</keyword>
<keyword id="KW-0138">CF(0)</keyword>
<keyword id="KW-0375">Hydrogen ion transport</keyword>
<keyword id="KW-0406">Ion transport</keyword>
<keyword id="KW-0472">Membrane</keyword>
<keyword id="KW-0812">Transmembrane</keyword>
<keyword id="KW-1133">Transmembrane helix</keyword>
<keyword id="KW-0813">Transport</keyword>
<protein>
    <recommendedName>
        <fullName evidence="1">ATP synthase subunit b</fullName>
    </recommendedName>
    <alternativeName>
        <fullName evidence="1">ATP synthase F(0) sector subunit b</fullName>
    </alternativeName>
    <alternativeName>
        <fullName evidence="1">ATPase subunit I</fullName>
    </alternativeName>
    <alternativeName>
        <fullName evidence="1">F-type ATPase subunit b</fullName>
        <shortName evidence="1">F-ATPase subunit b</shortName>
    </alternativeName>
</protein>